<protein>
    <recommendedName>
        <fullName evidence="1">ATP-dependent protease ATPase subunit HslU</fullName>
    </recommendedName>
    <alternativeName>
        <fullName evidence="1">Unfoldase HslU</fullName>
    </alternativeName>
</protein>
<evidence type="ECO:0000255" key="1">
    <source>
        <dbReference type="HAMAP-Rule" id="MF_00249"/>
    </source>
</evidence>
<accession>B2T1N8</accession>
<name>HSLU_PARPJ</name>
<feature type="chain" id="PRO_1000100942" description="ATP-dependent protease ATPase subunit HslU">
    <location>
        <begin position="1"/>
        <end position="448"/>
    </location>
</feature>
<feature type="binding site" evidence="1">
    <location>
        <position position="18"/>
    </location>
    <ligand>
        <name>ATP</name>
        <dbReference type="ChEBI" id="CHEBI:30616"/>
    </ligand>
</feature>
<feature type="binding site" evidence="1">
    <location>
        <begin position="60"/>
        <end position="65"/>
    </location>
    <ligand>
        <name>ATP</name>
        <dbReference type="ChEBI" id="CHEBI:30616"/>
    </ligand>
</feature>
<feature type="binding site" evidence="1">
    <location>
        <position position="261"/>
    </location>
    <ligand>
        <name>ATP</name>
        <dbReference type="ChEBI" id="CHEBI:30616"/>
    </ligand>
</feature>
<feature type="binding site" evidence="1">
    <location>
        <position position="326"/>
    </location>
    <ligand>
        <name>ATP</name>
        <dbReference type="ChEBI" id="CHEBI:30616"/>
    </ligand>
</feature>
<feature type="binding site" evidence="1">
    <location>
        <position position="398"/>
    </location>
    <ligand>
        <name>ATP</name>
        <dbReference type="ChEBI" id="CHEBI:30616"/>
    </ligand>
</feature>
<gene>
    <name evidence="1" type="primary">hslU</name>
    <name type="ordered locus">Bphyt_0342</name>
</gene>
<sequence length="448" mass="49816">MSTMTPAEIVSELDKHIIGQGRAKKAVAVALRNRWRRQQVEDPLRQEITPKNILMIGPTGVGKTEIARRLAKLADAPFIKIEATKFTEVGYVGRDVDSIVRDLIEISVKQTRETEMRKVRTKAEDQAEDRILDILLPSARPVGFGASSSAADTVDESSTTRQTFRKRLREGLLDDKEIELDVEQPQVGMDIMGPPGMEDMTEQIRSMFANIGGGKKTRRKLKVKEALKVLTDEEAGKMLNDEEVKTKAVQNVEQNGIVFLDEIDKIASRNEAGGGEVSRQGVQRDLLPLVEGTTINTKYGMVKTDHILFIASGAFHLAKPSDLIPELQGRFPIRVELDSLSVNDFESILVSTDASLVKQYQALLATEDVHLEFADDGIRRLAEIAYSVNEKTENIGARRLYTVIEKLLEEVSFAAGNHSGRTVQIDAAYVDRALNEVAEDEDLSRYVL</sequence>
<reference key="1">
    <citation type="journal article" date="2011" name="J. Bacteriol.">
        <title>Complete genome sequence of the plant growth-promoting endophyte Burkholderia phytofirmans strain PsJN.</title>
        <authorList>
            <person name="Weilharter A."/>
            <person name="Mitter B."/>
            <person name="Shin M.V."/>
            <person name="Chain P.S."/>
            <person name="Nowak J."/>
            <person name="Sessitsch A."/>
        </authorList>
    </citation>
    <scope>NUCLEOTIDE SEQUENCE [LARGE SCALE GENOMIC DNA]</scope>
    <source>
        <strain>DSM 17436 / LMG 22146 / PsJN</strain>
    </source>
</reference>
<comment type="function">
    <text evidence="1">ATPase subunit of a proteasome-like degradation complex; this subunit has chaperone activity. The binding of ATP and its subsequent hydrolysis by HslU are essential for unfolding of protein substrates subsequently hydrolyzed by HslV. HslU recognizes the N-terminal part of its protein substrates and unfolds these before they are guided to HslV for hydrolysis.</text>
</comment>
<comment type="subunit">
    <text evidence="1">A double ring-shaped homohexamer of HslV is capped on each side by a ring-shaped HslU homohexamer. The assembly of the HslU/HslV complex is dependent on binding of ATP.</text>
</comment>
<comment type="subcellular location">
    <subcellularLocation>
        <location evidence="1">Cytoplasm</location>
    </subcellularLocation>
</comment>
<comment type="similarity">
    <text evidence="1">Belongs to the ClpX chaperone family. HslU subfamily.</text>
</comment>
<organism>
    <name type="scientific">Paraburkholderia phytofirmans (strain DSM 17436 / LMG 22146 / PsJN)</name>
    <name type="common">Burkholderia phytofirmans</name>
    <dbReference type="NCBI Taxonomy" id="398527"/>
    <lineage>
        <taxon>Bacteria</taxon>
        <taxon>Pseudomonadati</taxon>
        <taxon>Pseudomonadota</taxon>
        <taxon>Betaproteobacteria</taxon>
        <taxon>Burkholderiales</taxon>
        <taxon>Burkholderiaceae</taxon>
        <taxon>Paraburkholderia</taxon>
    </lineage>
</organism>
<keyword id="KW-0067">ATP-binding</keyword>
<keyword id="KW-0143">Chaperone</keyword>
<keyword id="KW-0963">Cytoplasm</keyword>
<keyword id="KW-0547">Nucleotide-binding</keyword>
<keyword id="KW-0346">Stress response</keyword>
<proteinExistence type="inferred from homology"/>
<dbReference type="EMBL" id="CP001052">
    <property type="protein sequence ID" value="ACD14767.1"/>
    <property type="molecule type" value="Genomic_DNA"/>
</dbReference>
<dbReference type="RefSeq" id="WP_012431410.1">
    <property type="nucleotide sequence ID" value="NC_010681.1"/>
</dbReference>
<dbReference type="SMR" id="B2T1N8"/>
<dbReference type="STRING" id="398527.Bphyt_0342"/>
<dbReference type="KEGG" id="bpy:Bphyt_0342"/>
<dbReference type="eggNOG" id="COG1220">
    <property type="taxonomic scope" value="Bacteria"/>
</dbReference>
<dbReference type="HOGENOM" id="CLU_033123_0_0_4"/>
<dbReference type="OrthoDB" id="9804062at2"/>
<dbReference type="Proteomes" id="UP000001739">
    <property type="component" value="Chromosome 1"/>
</dbReference>
<dbReference type="GO" id="GO:0009376">
    <property type="term" value="C:HslUV protease complex"/>
    <property type="evidence" value="ECO:0007669"/>
    <property type="project" value="UniProtKB-UniRule"/>
</dbReference>
<dbReference type="GO" id="GO:0005524">
    <property type="term" value="F:ATP binding"/>
    <property type="evidence" value="ECO:0007669"/>
    <property type="project" value="UniProtKB-UniRule"/>
</dbReference>
<dbReference type="GO" id="GO:0016887">
    <property type="term" value="F:ATP hydrolysis activity"/>
    <property type="evidence" value="ECO:0007669"/>
    <property type="project" value="InterPro"/>
</dbReference>
<dbReference type="GO" id="GO:0008233">
    <property type="term" value="F:peptidase activity"/>
    <property type="evidence" value="ECO:0007669"/>
    <property type="project" value="InterPro"/>
</dbReference>
<dbReference type="GO" id="GO:0036402">
    <property type="term" value="F:proteasome-activating activity"/>
    <property type="evidence" value="ECO:0007669"/>
    <property type="project" value="UniProtKB-UniRule"/>
</dbReference>
<dbReference type="GO" id="GO:0043335">
    <property type="term" value="P:protein unfolding"/>
    <property type="evidence" value="ECO:0007669"/>
    <property type="project" value="UniProtKB-UniRule"/>
</dbReference>
<dbReference type="GO" id="GO:0051603">
    <property type="term" value="P:proteolysis involved in protein catabolic process"/>
    <property type="evidence" value="ECO:0007669"/>
    <property type="project" value="TreeGrafter"/>
</dbReference>
<dbReference type="CDD" id="cd19498">
    <property type="entry name" value="RecA-like_HslU"/>
    <property type="match status" value="1"/>
</dbReference>
<dbReference type="FunFam" id="3.40.50.300:FF:000213">
    <property type="entry name" value="ATP-dependent protease ATPase subunit HslU"/>
    <property type="match status" value="1"/>
</dbReference>
<dbReference type="FunFam" id="3.40.50.300:FF:000220">
    <property type="entry name" value="ATP-dependent protease ATPase subunit HslU"/>
    <property type="match status" value="1"/>
</dbReference>
<dbReference type="Gene3D" id="1.10.8.60">
    <property type="match status" value="1"/>
</dbReference>
<dbReference type="Gene3D" id="3.40.50.300">
    <property type="entry name" value="P-loop containing nucleotide triphosphate hydrolases"/>
    <property type="match status" value="2"/>
</dbReference>
<dbReference type="HAMAP" id="MF_00249">
    <property type="entry name" value="HslU"/>
    <property type="match status" value="1"/>
</dbReference>
<dbReference type="InterPro" id="IPR003593">
    <property type="entry name" value="AAA+_ATPase"/>
</dbReference>
<dbReference type="InterPro" id="IPR050052">
    <property type="entry name" value="ATP-dep_Clp_protease_ClpX"/>
</dbReference>
<dbReference type="InterPro" id="IPR003959">
    <property type="entry name" value="ATPase_AAA_core"/>
</dbReference>
<dbReference type="InterPro" id="IPR019489">
    <property type="entry name" value="Clp_ATPase_C"/>
</dbReference>
<dbReference type="InterPro" id="IPR004491">
    <property type="entry name" value="HslU"/>
</dbReference>
<dbReference type="InterPro" id="IPR027417">
    <property type="entry name" value="P-loop_NTPase"/>
</dbReference>
<dbReference type="NCBIfam" id="TIGR00390">
    <property type="entry name" value="hslU"/>
    <property type="match status" value="1"/>
</dbReference>
<dbReference type="NCBIfam" id="NF003544">
    <property type="entry name" value="PRK05201.1"/>
    <property type="match status" value="1"/>
</dbReference>
<dbReference type="PANTHER" id="PTHR48102">
    <property type="entry name" value="ATP-DEPENDENT CLP PROTEASE ATP-BINDING SUBUNIT CLPX-LIKE, MITOCHONDRIAL-RELATED"/>
    <property type="match status" value="1"/>
</dbReference>
<dbReference type="PANTHER" id="PTHR48102:SF3">
    <property type="entry name" value="ATP-DEPENDENT PROTEASE ATPASE SUBUNIT HSLU"/>
    <property type="match status" value="1"/>
</dbReference>
<dbReference type="Pfam" id="PF00004">
    <property type="entry name" value="AAA"/>
    <property type="match status" value="1"/>
</dbReference>
<dbReference type="Pfam" id="PF07724">
    <property type="entry name" value="AAA_2"/>
    <property type="match status" value="1"/>
</dbReference>
<dbReference type="SMART" id="SM00382">
    <property type="entry name" value="AAA"/>
    <property type="match status" value="1"/>
</dbReference>
<dbReference type="SMART" id="SM01086">
    <property type="entry name" value="ClpB_D2-small"/>
    <property type="match status" value="1"/>
</dbReference>
<dbReference type="SUPFAM" id="SSF52540">
    <property type="entry name" value="P-loop containing nucleoside triphosphate hydrolases"/>
    <property type="match status" value="1"/>
</dbReference>